<sequence length="191" mass="21308">MEEKVESTTTPDGPCVVSVQETEKWMEEAMRMAKEALENIEVPVGCLMVYNNEVVGKGRNEVNQTKNATRHAEMVAIDQVLDWCHQHGQSPSTVFEHTVLYVTVEPCIMCAAALRLMKIPLVVYGCQNERFGGCGSVLNIASADLPNTGRPFQCIPGYRAEEAVELLKTFYKQENPNAPKSKVRKKDCQKS</sequence>
<comment type="function">
    <text evidence="1">Probably participates in deamination of adenosine-34 to inosine in many tRNAs.</text>
</comment>
<comment type="catalytic activity">
    <reaction evidence="3">
        <text>adenosine(34) in tRNA + H2O + H(+) = inosine(34) in tRNA + NH4(+)</text>
        <dbReference type="Rhea" id="RHEA:43168"/>
        <dbReference type="Rhea" id="RHEA-COMP:10373"/>
        <dbReference type="Rhea" id="RHEA-COMP:10374"/>
        <dbReference type="ChEBI" id="CHEBI:15377"/>
        <dbReference type="ChEBI" id="CHEBI:15378"/>
        <dbReference type="ChEBI" id="CHEBI:28938"/>
        <dbReference type="ChEBI" id="CHEBI:74411"/>
        <dbReference type="ChEBI" id="CHEBI:82852"/>
        <dbReference type="EC" id="3.5.4.33"/>
    </reaction>
</comment>
<comment type="cofactor">
    <cofactor evidence="1">
        <name>Zn(2+)</name>
        <dbReference type="ChEBI" id="CHEBI:29105"/>
    </cofactor>
</comment>
<comment type="similarity">
    <text evidence="3">Belongs to the cytidine and deoxycytidylate deaminase family. ADAT2 subfamily.</text>
</comment>
<protein>
    <recommendedName>
        <fullName>tRNA-specific adenosine deaminase 2</fullName>
        <ecNumber evidence="3">3.5.4.33</ecNumber>
    </recommendedName>
    <alternativeName>
        <fullName>Deaminase domain-containing protein 1</fullName>
    </alternativeName>
    <alternativeName>
        <fullName>tRNA-specific adenosine-34 deaminase subunit ADAT2</fullName>
    </alternativeName>
</protein>
<organism>
    <name type="scientific">Mus musculus</name>
    <name type="common">Mouse</name>
    <dbReference type="NCBI Taxonomy" id="10090"/>
    <lineage>
        <taxon>Eukaryota</taxon>
        <taxon>Metazoa</taxon>
        <taxon>Chordata</taxon>
        <taxon>Craniata</taxon>
        <taxon>Vertebrata</taxon>
        <taxon>Euteleostomi</taxon>
        <taxon>Mammalia</taxon>
        <taxon>Eutheria</taxon>
        <taxon>Euarchontoglires</taxon>
        <taxon>Glires</taxon>
        <taxon>Rodentia</taxon>
        <taxon>Myomorpha</taxon>
        <taxon>Muroidea</taxon>
        <taxon>Muridae</taxon>
        <taxon>Murinae</taxon>
        <taxon>Mus</taxon>
        <taxon>Mus</taxon>
    </lineage>
</organism>
<feature type="chain" id="PRO_0000287654" description="tRNA-specific adenosine deaminase 2">
    <location>
        <begin position="1"/>
        <end position="191"/>
    </location>
</feature>
<feature type="domain" description="CMP/dCMP-type deaminase" evidence="2">
    <location>
        <begin position="20"/>
        <end position="145"/>
    </location>
</feature>
<feature type="active site" description="Proton donor" evidence="1">
    <location>
        <position position="73"/>
    </location>
</feature>
<feature type="binding site" evidence="1">
    <location>
        <position position="71"/>
    </location>
    <ligand>
        <name>Zn(2+)</name>
        <dbReference type="ChEBI" id="CHEBI:29105"/>
        <note>catalytic</note>
    </ligand>
</feature>
<feature type="binding site" evidence="1">
    <location>
        <position position="107"/>
    </location>
    <ligand>
        <name>Zn(2+)</name>
        <dbReference type="ChEBI" id="CHEBI:29105"/>
        <note>catalytic</note>
    </ligand>
</feature>
<feature type="binding site" evidence="1">
    <location>
        <position position="110"/>
    </location>
    <ligand>
        <name>Zn(2+)</name>
        <dbReference type="ChEBI" id="CHEBI:29105"/>
        <note>catalytic</note>
    </ligand>
</feature>
<feature type="sequence conflict" description="In Ref. 1; BAB32363." evidence="3" ref="1">
    <original>D</original>
    <variation>H</variation>
    <location>
        <position position="12"/>
    </location>
</feature>
<feature type="sequence conflict" description="In Ref. 1; BAB32363." evidence="3" ref="1">
    <original>M</original>
    <variation>T</variation>
    <location>
        <position position="30"/>
    </location>
</feature>
<feature type="sequence conflict" description="In Ref. 1; BAB32363." evidence="3" ref="1">
    <original>K</original>
    <variation>N</variation>
    <location>
        <position position="34"/>
    </location>
</feature>
<feature type="sequence conflict" description="In Ref. 1; BAB32363." evidence="3" ref="1">
    <original>R</original>
    <variation>T</variation>
    <location>
        <position position="59"/>
    </location>
</feature>
<feature type="helix" evidence="4">
    <location>
        <begin position="16"/>
        <end position="19"/>
    </location>
</feature>
<feature type="helix" evidence="4">
    <location>
        <begin position="22"/>
        <end position="38"/>
    </location>
</feature>
<feature type="strand" evidence="4">
    <location>
        <begin position="45"/>
        <end position="50"/>
    </location>
</feature>
<feature type="strand" evidence="4">
    <location>
        <begin position="53"/>
        <end position="59"/>
    </location>
</feature>
<feature type="helix" evidence="4">
    <location>
        <begin position="62"/>
        <end position="65"/>
    </location>
</feature>
<feature type="helix" evidence="4">
    <location>
        <begin position="72"/>
        <end position="86"/>
    </location>
</feature>
<feature type="helix" evidence="4">
    <location>
        <begin position="91"/>
        <end position="95"/>
    </location>
</feature>
<feature type="strand" evidence="4">
    <location>
        <begin position="98"/>
        <end position="104"/>
    </location>
</feature>
<feature type="helix" evidence="4">
    <location>
        <begin position="108"/>
        <end position="116"/>
    </location>
</feature>
<feature type="strand" evidence="4">
    <location>
        <begin position="121"/>
        <end position="126"/>
    </location>
</feature>
<feature type="turn" evidence="4">
    <location>
        <begin position="129"/>
        <end position="131"/>
    </location>
</feature>
<feature type="turn" evidence="4">
    <location>
        <begin position="140"/>
        <end position="142"/>
    </location>
</feature>
<feature type="strand" evidence="4">
    <location>
        <begin position="153"/>
        <end position="155"/>
    </location>
</feature>
<feature type="helix" evidence="4">
    <location>
        <begin position="160"/>
        <end position="172"/>
    </location>
</feature>
<gene>
    <name type="primary">Adat2</name>
    <name type="synonym">Deadc1</name>
</gene>
<name>ADAT2_MOUSE</name>
<keyword id="KW-0002">3D-structure</keyword>
<keyword id="KW-0378">Hydrolase</keyword>
<keyword id="KW-0479">Metal-binding</keyword>
<keyword id="KW-1185">Reference proteome</keyword>
<keyword id="KW-0819">tRNA processing</keyword>
<keyword id="KW-0862">Zinc</keyword>
<evidence type="ECO:0000250" key="1"/>
<evidence type="ECO:0000255" key="2">
    <source>
        <dbReference type="PROSITE-ProRule" id="PRU01083"/>
    </source>
</evidence>
<evidence type="ECO:0000305" key="3"/>
<evidence type="ECO:0007829" key="4">
    <source>
        <dbReference type="PDB" id="7NZ9"/>
    </source>
</evidence>
<dbReference type="EC" id="3.5.4.33" evidence="3"/>
<dbReference type="EMBL" id="AK021291">
    <property type="protein sequence ID" value="BAB32363.2"/>
    <property type="molecule type" value="mRNA"/>
</dbReference>
<dbReference type="EMBL" id="BC062195">
    <property type="protein sequence ID" value="AAH62195.1"/>
    <property type="molecule type" value="mRNA"/>
</dbReference>
<dbReference type="CCDS" id="CCDS35847.1"/>
<dbReference type="RefSeq" id="NP_080024.3">
    <property type="nucleotide sequence ID" value="NM_025748.4"/>
</dbReference>
<dbReference type="PDB" id="7NZ7">
    <property type="method" value="X-ray"/>
    <property type="resolution" value="2.96 A"/>
    <property type="chains" value="A=1-191"/>
</dbReference>
<dbReference type="PDB" id="7NZ8">
    <property type="method" value="X-ray"/>
    <property type="resolution" value="2.12 A"/>
    <property type="chains" value="A=1-191"/>
</dbReference>
<dbReference type="PDB" id="7NZ9">
    <property type="method" value="X-ray"/>
    <property type="resolution" value="1.99 A"/>
    <property type="chains" value="A=1-191"/>
</dbReference>
<dbReference type="PDBsum" id="7NZ7"/>
<dbReference type="PDBsum" id="7NZ8"/>
<dbReference type="PDBsum" id="7NZ9"/>
<dbReference type="SMR" id="Q6P6J0"/>
<dbReference type="FunCoup" id="Q6P6J0">
    <property type="interactions" value="976"/>
</dbReference>
<dbReference type="STRING" id="10090.ENSMUSP00000019944"/>
<dbReference type="PhosphoSitePlus" id="Q6P6J0"/>
<dbReference type="SwissPalm" id="Q6P6J0"/>
<dbReference type="PaxDb" id="10090-ENSMUSP00000019944"/>
<dbReference type="PeptideAtlas" id="Q6P6J0"/>
<dbReference type="ProteomicsDB" id="285676"/>
<dbReference type="Pumba" id="Q6P6J0"/>
<dbReference type="Antibodypedia" id="33139">
    <property type="antibodies" value="61 antibodies from 18 providers"/>
</dbReference>
<dbReference type="DNASU" id="66757"/>
<dbReference type="Ensembl" id="ENSMUST00000019944.9">
    <property type="protein sequence ID" value="ENSMUSP00000019944.9"/>
    <property type="gene ID" value="ENSMUSG00000019808.9"/>
</dbReference>
<dbReference type="GeneID" id="66757"/>
<dbReference type="KEGG" id="mmu:66757"/>
<dbReference type="UCSC" id="uc007ela.2">
    <property type="organism name" value="mouse"/>
</dbReference>
<dbReference type="AGR" id="MGI:1914007"/>
<dbReference type="CTD" id="134637"/>
<dbReference type="MGI" id="MGI:1914007">
    <property type="gene designation" value="Adat2"/>
</dbReference>
<dbReference type="VEuPathDB" id="HostDB:ENSMUSG00000019808"/>
<dbReference type="eggNOG" id="KOG1018">
    <property type="taxonomic scope" value="Eukaryota"/>
</dbReference>
<dbReference type="GeneTree" id="ENSGT00390000000280"/>
<dbReference type="HOGENOM" id="CLU_025810_8_1_1"/>
<dbReference type="InParanoid" id="Q6P6J0"/>
<dbReference type="OMA" id="PCQMCAG"/>
<dbReference type="OrthoDB" id="408702at2759"/>
<dbReference type="PhylomeDB" id="Q6P6J0"/>
<dbReference type="TreeFam" id="TF313782"/>
<dbReference type="BioGRID-ORCS" id="66757">
    <property type="hits" value="27 hits in 83 CRISPR screens"/>
</dbReference>
<dbReference type="PRO" id="PR:Q6P6J0"/>
<dbReference type="Proteomes" id="UP000000589">
    <property type="component" value="Chromosome 10"/>
</dbReference>
<dbReference type="RNAct" id="Q6P6J0">
    <property type="molecule type" value="protein"/>
</dbReference>
<dbReference type="Bgee" id="ENSMUSG00000019808">
    <property type="expression patterns" value="Expressed in endocardial cushion and 179 other cell types or tissues"/>
</dbReference>
<dbReference type="GO" id="GO:0052717">
    <property type="term" value="F:tRNA-specific adenosine-34 deaminase activity"/>
    <property type="evidence" value="ECO:0007669"/>
    <property type="project" value="UniProtKB-EC"/>
</dbReference>
<dbReference type="GO" id="GO:0008270">
    <property type="term" value="F:zinc ion binding"/>
    <property type="evidence" value="ECO:0007669"/>
    <property type="project" value="InterPro"/>
</dbReference>
<dbReference type="GO" id="GO:0002100">
    <property type="term" value="P:tRNA wobble adenosine to inosine editing"/>
    <property type="evidence" value="ECO:0007669"/>
    <property type="project" value="InterPro"/>
</dbReference>
<dbReference type="CDD" id="cd01285">
    <property type="entry name" value="nucleoside_deaminase"/>
    <property type="match status" value="1"/>
</dbReference>
<dbReference type="FunFam" id="3.40.140.10:FF:000036">
    <property type="entry name" value="tRNA-specific adenosine deaminase 2"/>
    <property type="match status" value="1"/>
</dbReference>
<dbReference type="Gene3D" id="3.40.140.10">
    <property type="entry name" value="Cytidine Deaminase, domain 2"/>
    <property type="match status" value="1"/>
</dbReference>
<dbReference type="HAMAP" id="MF_00972">
    <property type="entry name" value="tRNA_aden_deaminase"/>
    <property type="match status" value="1"/>
</dbReference>
<dbReference type="InterPro" id="IPR016192">
    <property type="entry name" value="APOBEC/CMP_deaminase_Zn-bd"/>
</dbReference>
<dbReference type="InterPro" id="IPR002125">
    <property type="entry name" value="CMP_dCMP_dom"/>
</dbReference>
<dbReference type="InterPro" id="IPR016193">
    <property type="entry name" value="Cytidine_deaminase-like"/>
</dbReference>
<dbReference type="InterPro" id="IPR028883">
    <property type="entry name" value="tRNA_aden_deaminase"/>
</dbReference>
<dbReference type="PANTHER" id="PTHR11079">
    <property type="entry name" value="CYTOSINE DEAMINASE FAMILY MEMBER"/>
    <property type="match status" value="1"/>
</dbReference>
<dbReference type="PANTHER" id="PTHR11079:SF149">
    <property type="entry name" value="TRNA-SPECIFIC ADENOSINE DEAMINASE 2"/>
    <property type="match status" value="1"/>
</dbReference>
<dbReference type="Pfam" id="PF14437">
    <property type="entry name" value="MafB19-deam"/>
    <property type="match status" value="1"/>
</dbReference>
<dbReference type="SUPFAM" id="SSF53927">
    <property type="entry name" value="Cytidine deaminase-like"/>
    <property type="match status" value="1"/>
</dbReference>
<dbReference type="PROSITE" id="PS00903">
    <property type="entry name" value="CYT_DCMP_DEAMINASES_1"/>
    <property type="match status" value="1"/>
</dbReference>
<dbReference type="PROSITE" id="PS51747">
    <property type="entry name" value="CYT_DCMP_DEAMINASES_2"/>
    <property type="match status" value="1"/>
</dbReference>
<proteinExistence type="evidence at protein level"/>
<accession>Q6P6J0</accession>
<accession>Q9CX14</accession>
<reference key="1">
    <citation type="journal article" date="2005" name="Science">
        <title>The transcriptional landscape of the mammalian genome.</title>
        <authorList>
            <person name="Carninci P."/>
            <person name="Kasukawa T."/>
            <person name="Katayama S."/>
            <person name="Gough J."/>
            <person name="Frith M.C."/>
            <person name="Maeda N."/>
            <person name="Oyama R."/>
            <person name="Ravasi T."/>
            <person name="Lenhard B."/>
            <person name="Wells C."/>
            <person name="Kodzius R."/>
            <person name="Shimokawa K."/>
            <person name="Bajic V.B."/>
            <person name="Brenner S.E."/>
            <person name="Batalov S."/>
            <person name="Forrest A.R."/>
            <person name="Zavolan M."/>
            <person name="Davis M.J."/>
            <person name="Wilming L.G."/>
            <person name="Aidinis V."/>
            <person name="Allen J.E."/>
            <person name="Ambesi-Impiombato A."/>
            <person name="Apweiler R."/>
            <person name="Aturaliya R.N."/>
            <person name="Bailey T.L."/>
            <person name="Bansal M."/>
            <person name="Baxter L."/>
            <person name="Beisel K.W."/>
            <person name="Bersano T."/>
            <person name="Bono H."/>
            <person name="Chalk A.M."/>
            <person name="Chiu K.P."/>
            <person name="Choudhary V."/>
            <person name="Christoffels A."/>
            <person name="Clutterbuck D.R."/>
            <person name="Crowe M.L."/>
            <person name="Dalla E."/>
            <person name="Dalrymple B.P."/>
            <person name="de Bono B."/>
            <person name="Della Gatta G."/>
            <person name="di Bernardo D."/>
            <person name="Down T."/>
            <person name="Engstrom P."/>
            <person name="Fagiolini M."/>
            <person name="Faulkner G."/>
            <person name="Fletcher C.F."/>
            <person name="Fukushima T."/>
            <person name="Furuno M."/>
            <person name="Futaki S."/>
            <person name="Gariboldi M."/>
            <person name="Georgii-Hemming P."/>
            <person name="Gingeras T.R."/>
            <person name="Gojobori T."/>
            <person name="Green R.E."/>
            <person name="Gustincich S."/>
            <person name="Harbers M."/>
            <person name="Hayashi Y."/>
            <person name="Hensch T.K."/>
            <person name="Hirokawa N."/>
            <person name="Hill D."/>
            <person name="Huminiecki L."/>
            <person name="Iacono M."/>
            <person name="Ikeo K."/>
            <person name="Iwama A."/>
            <person name="Ishikawa T."/>
            <person name="Jakt M."/>
            <person name="Kanapin A."/>
            <person name="Katoh M."/>
            <person name="Kawasawa Y."/>
            <person name="Kelso J."/>
            <person name="Kitamura H."/>
            <person name="Kitano H."/>
            <person name="Kollias G."/>
            <person name="Krishnan S.P."/>
            <person name="Kruger A."/>
            <person name="Kummerfeld S.K."/>
            <person name="Kurochkin I.V."/>
            <person name="Lareau L.F."/>
            <person name="Lazarevic D."/>
            <person name="Lipovich L."/>
            <person name="Liu J."/>
            <person name="Liuni S."/>
            <person name="McWilliam S."/>
            <person name="Madan Babu M."/>
            <person name="Madera M."/>
            <person name="Marchionni L."/>
            <person name="Matsuda H."/>
            <person name="Matsuzawa S."/>
            <person name="Miki H."/>
            <person name="Mignone F."/>
            <person name="Miyake S."/>
            <person name="Morris K."/>
            <person name="Mottagui-Tabar S."/>
            <person name="Mulder N."/>
            <person name="Nakano N."/>
            <person name="Nakauchi H."/>
            <person name="Ng P."/>
            <person name="Nilsson R."/>
            <person name="Nishiguchi S."/>
            <person name="Nishikawa S."/>
            <person name="Nori F."/>
            <person name="Ohara O."/>
            <person name="Okazaki Y."/>
            <person name="Orlando V."/>
            <person name="Pang K.C."/>
            <person name="Pavan W.J."/>
            <person name="Pavesi G."/>
            <person name="Pesole G."/>
            <person name="Petrovsky N."/>
            <person name="Piazza S."/>
            <person name="Reed J."/>
            <person name="Reid J.F."/>
            <person name="Ring B.Z."/>
            <person name="Ringwald M."/>
            <person name="Rost B."/>
            <person name="Ruan Y."/>
            <person name="Salzberg S.L."/>
            <person name="Sandelin A."/>
            <person name="Schneider C."/>
            <person name="Schoenbach C."/>
            <person name="Sekiguchi K."/>
            <person name="Semple C.A."/>
            <person name="Seno S."/>
            <person name="Sessa L."/>
            <person name="Sheng Y."/>
            <person name="Shibata Y."/>
            <person name="Shimada H."/>
            <person name="Shimada K."/>
            <person name="Silva D."/>
            <person name="Sinclair B."/>
            <person name="Sperling S."/>
            <person name="Stupka E."/>
            <person name="Sugiura K."/>
            <person name="Sultana R."/>
            <person name="Takenaka Y."/>
            <person name="Taki K."/>
            <person name="Tammoja K."/>
            <person name="Tan S.L."/>
            <person name="Tang S."/>
            <person name="Taylor M.S."/>
            <person name="Tegner J."/>
            <person name="Teichmann S.A."/>
            <person name="Ueda H.R."/>
            <person name="van Nimwegen E."/>
            <person name="Verardo R."/>
            <person name="Wei C.L."/>
            <person name="Yagi K."/>
            <person name="Yamanishi H."/>
            <person name="Zabarovsky E."/>
            <person name="Zhu S."/>
            <person name="Zimmer A."/>
            <person name="Hide W."/>
            <person name="Bult C."/>
            <person name="Grimmond S.M."/>
            <person name="Teasdale R.D."/>
            <person name="Liu E.T."/>
            <person name="Brusic V."/>
            <person name="Quackenbush J."/>
            <person name="Wahlestedt C."/>
            <person name="Mattick J.S."/>
            <person name="Hume D.A."/>
            <person name="Kai C."/>
            <person name="Sasaki D."/>
            <person name="Tomaru Y."/>
            <person name="Fukuda S."/>
            <person name="Kanamori-Katayama M."/>
            <person name="Suzuki M."/>
            <person name="Aoki J."/>
            <person name="Arakawa T."/>
            <person name="Iida J."/>
            <person name="Imamura K."/>
            <person name="Itoh M."/>
            <person name="Kato T."/>
            <person name="Kawaji H."/>
            <person name="Kawagashira N."/>
            <person name="Kawashima T."/>
            <person name="Kojima M."/>
            <person name="Kondo S."/>
            <person name="Konno H."/>
            <person name="Nakano K."/>
            <person name="Ninomiya N."/>
            <person name="Nishio T."/>
            <person name="Okada M."/>
            <person name="Plessy C."/>
            <person name="Shibata K."/>
            <person name="Shiraki T."/>
            <person name="Suzuki S."/>
            <person name="Tagami M."/>
            <person name="Waki K."/>
            <person name="Watahiki A."/>
            <person name="Okamura-Oho Y."/>
            <person name="Suzuki H."/>
            <person name="Kawai J."/>
            <person name="Hayashizaki Y."/>
        </authorList>
    </citation>
    <scope>NUCLEOTIDE SEQUENCE [LARGE SCALE MRNA]</scope>
    <source>
        <strain>C57BL/6J</strain>
        <tissue>Stomach</tissue>
    </source>
</reference>
<reference key="2">
    <citation type="journal article" date="2004" name="Genome Res.">
        <title>The status, quality, and expansion of the NIH full-length cDNA project: the Mammalian Gene Collection (MGC).</title>
        <authorList>
            <consortium name="The MGC Project Team"/>
        </authorList>
    </citation>
    <scope>NUCLEOTIDE SEQUENCE [LARGE SCALE MRNA]</scope>
    <source>
        <strain>NMRI</strain>
        <tissue>Mammary tumor</tissue>
    </source>
</reference>
<reference key="3">
    <citation type="journal article" date="2010" name="Cell">
        <title>A tissue-specific atlas of mouse protein phosphorylation and expression.</title>
        <authorList>
            <person name="Huttlin E.L."/>
            <person name="Jedrychowski M.P."/>
            <person name="Elias J.E."/>
            <person name="Goswami T."/>
            <person name="Rad R."/>
            <person name="Beausoleil S.A."/>
            <person name="Villen J."/>
            <person name="Haas W."/>
            <person name="Sowa M.E."/>
            <person name="Gygi S.P."/>
        </authorList>
    </citation>
    <scope>IDENTIFICATION BY MASS SPECTROMETRY [LARGE SCALE ANALYSIS]</scope>
    <source>
        <tissue>Liver</tissue>
        <tissue>Pancreas</tissue>
        <tissue>Spleen</tissue>
        <tissue>Testis</tissue>
    </source>
</reference>